<protein>
    <recommendedName>
        <fullName evidence="1">Bifunctional purine biosynthesis protein PurH</fullName>
    </recommendedName>
    <domain>
        <recommendedName>
            <fullName evidence="1">Phosphoribosylaminoimidazolecarboxamide formyltransferase</fullName>
            <ecNumber evidence="1">2.1.2.3</ecNumber>
        </recommendedName>
        <alternativeName>
            <fullName evidence="1">AICAR transformylase</fullName>
        </alternativeName>
    </domain>
    <domain>
        <recommendedName>
            <fullName evidence="1">IMP cyclohydrolase</fullName>
            <ecNumber evidence="1">3.5.4.10</ecNumber>
        </recommendedName>
        <alternativeName>
            <fullName evidence="1">ATIC</fullName>
        </alternativeName>
        <alternativeName>
            <fullName evidence="1">IMP synthase</fullName>
        </alternativeName>
        <alternativeName>
            <fullName evidence="1">Inosinicase</fullName>
        </alternativeName>
    </domain>
</protein>
<gene>
    <name evidence="1" type="primary">purH</name>
    <name type="ordered locus">YPN_0237</name>
    <name type="ORF">YP516_0216</name>
</gene>
<proteinExistence type="inferred from homology"/>
<reference key="1">
    <citation type="journal article" date="2006" name="J. Bacteriol.">
        <title>Complete genome sequence of Yersinia pestis strains Antiqua and Nepal516: evidence of gene reduction in an emerging pathogen.</title>
        <authorList>
            <person name="Chain P.S.G."/>
            <person name="Hu P."/>
            <person name="Malfatti S.A."/>
            <person name="Radnedge L."/>
            <person name="Larimer F."/>
            <person name="Vergez L.M."/>
            <person name="Worsham P."/>
            <person name="Chu M.C."/>
            <person name="Andersen G.L."/>
        </authorList>
    </citation>
    <scope>NUCLEOTIDE SEQUENCE [LARGE SCALE GENOMIC DNA]</scope>
    <source>
        <strain>Nepal516</strain>
    </source>
</reference>
<reference key="2">
    <citation type="submission" date="2009-04" db="EMBL/GenBank/DDBJ databases">
        <title>Yersinia pestis Nepal516A whole genome shotgun sequencing project.</title>
        <authorList>
            <person name="Plunkett G. III"/>
            <person name="Anderson B.D."/>
            <person name="Baumler D.J."/>
            <person name="Burland V."/>
            <person name="Cabot E.L."/>
            <person name="Glasner J.D."/>
            <person name="Mau B."/>
            <person name="Neeno-Eckwall E."/>
            <person name="Perna N.T."/>
            <person name="Munk A.C."/>
            <person name="Tapia R."/>
            <person name="Green L.D."/>
            <person name="Rogers Y.C."/>
            <person name="Detter J.C."/>
            <person name="Bruce D.C."/>
            <person name="Brettin T.S."/>
        </authorList>
    </citation>
    <scope>NUCLEOTIDE SEQUENCE [LARGE SCALE GENOMIC DNA]</scope>
    <source>
        <strain>Nepal516</strain>
    </source>
</reference>
<feature type="chain" id="PRO_1000018992" description="Bifunctional purine biosynthesis protein PurH">
    <location>
        <begin position="1"/>
        <end position="529"/>
    </location>
</feature>
<feature type="domain" description="MGS-like" evidence="2">
    <location>
        <begin position="1"/>
        <end position="148"/>
    </location>
</feature>
<name>PUR9_YERPN</name>
<keyword id="KW-0378">Hydrolase</keyword>
<keyword id="KW-0511">Multifunctional enzyme</keyword>
<keyword id="KW-0658">Purine biosynthesis</keyword>
<keyword id="KW-0808">Transferase</keyword>
<evidence type="ECO:0000255" key="1">
    <source>
        <dbReference type="HAMAP-Rule" id="MF_00139"/>
    </source>
</evidence>
<evidence type="ECO:0000255" key="2">
    <source>
        <dbReference type="PROSITE-ProRule" id="PRU01202"/>
    </source>
</evidence>
<sequence>MQQRRPIRRALLSVSDKAGIIEFAQALSQRGIELLSTGGTARLLADAGLPVTEVSDYTGFPEMMDGRVKTLHPKVHGGILGRRGQDDGIMAQHGIQPIDIVVVNLYPFAQTVARPDCSLEDAVENIDIGGPTMVRSAAKNHKDVAIVVKSSDYPAIITELDNNDGSLTYPTRFNLAIKAFEHTAAYDSMIANYFGTLVPPYHGDTEQPSGHFPRTLNLNYIKKQDMRYGENSHQQAAFYIEEDVKEASVATAQQLQGKALSYNNIADTDAALECVKEFSEPACVIVKHANPCGVAIGDSILAAYERAYQTDPTSAFGGIIAFNRELDAATASAIISRQFVEVIIAPTVSSDALALLAAKQNVRVLTCGQWQARSAGLDFKRVNGGLLVQERDLGMVTAADLRVVSKRQPTEQELRDALFCWKVAKFVKSNAIVYARDNMTIGIGAGQMSRVYSAKIAGIKAADEGLEVAGSAMASDAFFPFRDGIDAAAAVGITCVIQPGGSIRDDEVIAAADEHSIAMIFTDMRHFRH</sequence>
<organism>
    <name type="scientific">Yersinia pestis bv. Antiqua (strain Nepal516)</name>
    <dbReference type="NCBI Taxonomy" id="377628"/>
    <lineage>
        <taxon>Bacteria</taxon>
        <taxon>Pseudomonadati</taxon>
        <taxon>Pseudomonadota</taxon>
        <taxon>Gammaproteobacteria</taxon>
        <taxon>Enterobacterales</taxon>
        <taxon>Yersiniaceae</taxon>
        <taxon>Yersinia</taxon>
    </lineage>
</organism>
<accession>Q1CN60</accession>
<accession>C4GNG5</accession>
<dbReference type="EC" id="2.1.2.3" evidence="1"/>
<dbReference type="EC" id="3.5.4.10" evidence="1"/>
<dbReference type="EMBL" id="CP000305">
    <property type="protein sequence ID" value="ABG16570.1"/>
    <property type="molecule type" value="Genomic_DNA"/>
</dbReference>
<dbReference type="EMBL" id="ACNQ01000004">
    <property type="protein sequence ID" value="EEO78489.1"/>
    <property type="molecule type" value="Genomic_DNA"/>
</dbReference>
<dbReference type="RefSeq" id="WP_002210692.1">
    <property type="nucleotide sequence ID" value="NZ_ACNQ01000004.1"/>
</dbReference>
<dbReference type="SMR" id="Q1CN60"/>
<dbReference type="GeneID" id="57974989"/>
<dbReference type="KEGG" id="ypn:YPN_0237"/>
<dbReference type="HOGENOM" id="CLU_016316_5_2_6"/>
<dbReference type="UniPathway" id="UPA00074">
    <property type="reaction ID" value="UER00133"/>
</dbReference>
<dbReference type="UniPathway" id="UPA00074">
    <property type="reaction ID" value="UER00135"/>
</dbReference>
<dbReference type="Proteomes" id="UP000008936">
    <property type="component" value="Chromosome"/>
</dbReference>
<dbReference type="GO" id="GO:0005829">
    <property type="term" value="C:cytosol"/>
    <property type="evidence" value="ECO:0007669"/>
    <property type="project" value="TreeGrafter"/>
</dbReference>
<dbReference type="GO" id="GO:0003937">
    <property type="term" value="F:IMP cyclohydrolase activity"/>
    <property type="evidence" value="ECO:0007669"/>
    <property type="project" value="UniProtKB-UniRule"/>
</dbReference>
<dbReference type="GO" id="GO:0004643">
    <property type="term" value="F:phosphoribosylaminoimidazolecarboxamide formyltransferase activity"/>
    <property type="evidence" value="ECO:0007669"/>
    <property type="project" value="UniProtKB-UniRule"/>
</dbReference>
<dbReference type="GO" id="GO:0006189">
    <property type="term" value="P:'de novo' IMP biosynthetic process"/>
    <property type="evidence" value="ECO:0007669"/>
    <property type="project" value="UniProtKB-UniRule"/>
</dbReference>
<dbReference type="CDD" id="cd01421">
    <property type="entry name" value="IMPCH"/>
    <property type="match status" value="1"/>
</dbReference>
<dbReference type="FunFam" id="3.40.140.20:FF:000001">
    <property type="entry name" value="Bifunctional purine biosynthesis protein PurH"/>
    <property type="match status" value="1"/>
</dbReference>
<dbReference type="FunFam" id="3.40.140.20:FF:000002">
    <property type="entry name" value="Bifunctional purine biosynthesis protein PurH"/>
    <property type="match status" value="1"/>
</dbReference>
<dbReference type="FunFam" id="3.40.50.1380:FF:000001">
    <property type="entry name" value="Bifunctional purine biosynthesis protein PurH"/>
    <property type="match status" value="1"/>
</dbReference>
<dbReference type="Gene3D" id="3.40.140.20">
    <property type="match status" value="2"/>
</dbReference>
<dbReference type="Gene3D" id="3.40.50.1380">
    <property type="entry name" value="Methylglyoxal synthase-like domain"/>
    <property type="match status" value="1"/>
</dbReference>
<dbReference type="HAMAP" id="MF_00139">
    <property type="entry name" value="PurH"/>
    <property type="match status" value="1"/>
</dbReference>
<dbReference type="InterPro" id="IPR024051">
    <property type="entry name" value="AICAR_Tfase_dup_dom_sf"/>
</dbReference>
<dbReference type="InterPro" id="IPR016193">
    <property type="entry name" value="Cytidine_deaminase-like"/>
</dbReference>
<dbReference type="InterPro" id="IPR011607">
    <property type="entry name" value="MGS-like_dom"/>
</dbReference>
<dbReference type="InterPro" id="IPR036914">
    <property type="entry name" value="MGS-like_dom_sf"/>
</dbReference>
<dbReference type="InterPro" id="IPR002695">
    <property type="entry name" value="PurH-like"/>
</dbReference>
<dbReference type="NCBIfam" id="NF002049">
    <property type="entry name" value="PRK00881.1"/>
    <property type="match status" value="1"/>
</dbReference>
<dbReference type="NCBIfam" id="TIGR00355">
    <property type="entry name" value="purH"/>
    <property type="match status" value="1"/>
</dbReference>
<dbReference type="PANTHER" id="PTHR11692:SF0">
    <property type="entry name" value="BIFUNCTIONAL PURINE BIOSYNTHESIS PROTEIN ATIC"/>
    <property type="match status" value="1"/>
</dbReference>
<dbReference type="PANTHER" id="PTHR11692">
    <property type="entry name" value="BIFUNCTIONAL PURINE BIOSYNTHESIS PROTEIN PURH"/>
    <property type="match status" value="1"/>
</dbReference>
<dbReference type="Pfam" id="PF01808">
    <property type="entry name" value="AICARFT_IMPCHas"/>
    <property type="match status" value="1"/>
</dbReference>
<dbReference type="Pfam" id="PF02142">
    <property type="entry name" value="MGS"/>
    <property type="match status" value="1"/>
</dbReference>
<dbReference type="PIRSF" id="PIRSF000414">
    <property type="entry name" value="AICARFT_IMPCHas"/>
    <property type="match status" value="1"/>
</dbReference>
<dbReference type="SMART" id="SM00798">
    <property type="entry name" value="AICARFT_IMPCHas"/>
    <property type="match status" value="1"/>
</dbReference>
<dbReference type="SMART" id="SM00851">
    <property type="entry name" value="MGS"/>
    <property type="match status" value="1"/>
</dbReference>
<dbReference type="SUPFAM" id="SSF53927">
    <property type="entry name" value="Cytidine deaminase-like"/>
    <property type="match status" value="1"/>
</dbReference>
<dbReference type="SUPFAM" id="SSF52335">
    <property type="entry name" value="Methylglyoxal synthase-like"/>
    <property type="match status" value="1"/>
</dbReference>
<dbReference type="PROSITE" id="PS51855">
    <property type="entry name" value="MGS"/>
    <property type="match status" value="1"/>
</dbReference>
<comment type="catalytic activity">
    <reaction evidence="1">
        <text>(6R)-10-formyltetrahydrofolate + 5-amino-1-(5-phospho-beta-D-ribosyl)imidazole-4-carboxamide = 5-formamido-1-(5-phospho-D-ribosyl)imidazole-4-carboxamide + (6S)-5,6,7,8-tetrahydrofolate</text>
        <dbReference type="Rhea" id="RHEA:22192"/>
        <dbReference type="ChEBI" id="CHEBI:57453"/>
        <dbReference type="ChEBI" id="CHEBI:58467"/>
        <dbReference type="ChEBI" id="CHEBI:58475"/>
        <dbReference type="ChEBI" id="CHEBI:195366"/>
        <dbReference type="EC" id="2.1.2.3"/>
    </reaction>
</comment>
<comment type="catalytic activity">
    <reaction evidence="1">
        <text>IMP + H2O = 5-formamido-1-(5-phospho-D-ribosyl)imidazole-4-carboxamide</text>
        <dbReference type="Rhea" id="RHEA:18445"/>
        <dbReference type="ChEBI" id="CHEBI:15377"/>
        <dbReference type="ChEBI" id="CHEBI:58053"/>
        <dbReference type="ChEBI" id="CHEBI:58467"/>
        <dbReference type="EC" id="3.5.4.10"/>
    </reaction>
</comment>
<comment type="pathway">
    <text evidence="1">Purine metabolism; IMP biosynthesis via de novo pathway; 5-formamido-1-(5-phospho-D-ribosyl)imidazole-4-carboxamide from 5-amino-1-(5-phospho-D-ribosyl)imidazole-4-carboxamide (10-formyl THF route): step 1/1.</text>
</comment>
<comment type="pathway">
    <text evidence="1">Purine metabolism; IMP biosynthesis via de novo pathway; IMP from 5-formamido-1-(5-phospho-D-ribosyl)imidazole-4-carboxamide: step 1/1.</text>
</comment>
<comment type="domain">
    <text evidence="1">The IMP cyclohydrolase activity resides in the N-terminal region.</text>
</comment>
<comment type="similarity">
    <text evidence="1">Belongs to the PurH family.</text>
</comment>